<evidence type="ECO:0000250" key="1"/>
<evidence type="ECO:0000255" key="2">
    <source>
        <dbReference type="HAMAP-Rule" id="MF_00103"/>
    </source>
</evidence>
<sequence>MPELPEVEVCRRGLEPELAGQVIQGVVIRAPKLRHEIPPALATLLPGCRVVAVRRRGKYLLLDCERRGVQGTLIIHLGMSGNLRFVPFDLPPAKHDHFELVLAGQILRFADPRRFGVVLWQPGPPASAECHPLLATQGIEPLSEMFTAEWLYEAIARRSGPIKPTLMDSHLVVGIGNIYASESLFRAGISPLRAANRVSRARYEILVPAIRETLSDAIAAGGSSIRDYVHSDGGAGCFQIQAGVYDRANQPCLRCGGVVRQIRQAGRSTYYCTGCQH</sequence>
<comment type="function">
    <text evidence="2">Involved in base excision repair of DNA damaged by oxidation or by mutagenic agents. Acts as a DNA glycosylase that recognizes and removes damaged bases. Has a preference for oxidized purines, such as 7,8-dihydro-8-oxoguanine (8-oxoG). Has AP (apurinic/apyrimidinic) lyase activity and introduces nicks in the DNA strand. Cleaves the DNA backbone by beta-delta elimination to generate a single-strand break at the site of the removed base with both 3'- and 5'-phosphates.</text>
</comment>
<comment type="catalytic activity">
    <reaction evidence="2">
        <text>Hydrolysis of DNA containing ring-opened 7-methylguanine residues, releasing 2,6-diamino-4-hydroxy-5-(N-methyl)formamidopyrimidine.</text>
        <dbReference type="EC" id="3.2.2.23"/>
    </reaction>
</comment>
<comment type="catalytic activity">
    <reaction evidence="2">
        <text>2'-deoxyribonucleotide-(2'-deoxyribose 5'-phosphate)-2'-deoxyribonucleotide-DNA = a 3'-end 2'-deoxyribonucleotide-(2,3-dehydro-2,3-deoxyribose 5'-phosphate)-DNA + a 5'-end 5'-phospho-2'-deoxyribonucleoside-DNA + H(+)</text>
        <dbReference type="Rhea" id="RHEA:66592"/>
        <dbReference type="Rhea" id="RHEA-COMP:13180"/>
        <dbReference type="Rhea" id="RHEA-COMP:16897"/>
        <dbReference type="Rhea" id="RHEA-COMP:17067"/>
        <dbReference type="ChEBI" id="CHEBI:15378"/>
        <dbReference type="ChEBI" id="CHEBI:136412"/>
        <dbReference type="ChEBI" id="CHEBI:157695"/>
        <dbReference type="ChEBI" id="CHEBI:167181"/>
        <dbReference type="EC" id="4.2.99.18"/>
    </reaction>
</comment>
<comment type="cofactor">
    <cofactor evidence="2">
        <name>Zn(2+)</name>
        <dbReference type="ChEBI" id="CHEBI:29105"/>
    </cofactor>
    <text evidence="2">Binds 1 zinc ion per subunit.</text>
</comment>
<comment type="subunit">
    <text evidence="2">Monomer.</text>
</comment>
<comment type="similarity">
    <text evidence="2">Belongs to the FPG family.</text>
</comment>
<feature type="initiator methionine" description="Removed" evidence="1">
    <location>
        <position position="1"/>
    </location>
</feature>
<feature type="chain" id="PRO_0000228429" description="Formamidopyrimidine-DNA glycosylase">
    <location>
        <begin position="2"/>
        <end position="277"/>
    </location>
</feature>
<feature type="zinc finger region" description="FPG-type" evidence="2">
    <location>
        <begin position="243"/>
        <end position="277"/>
    </location>
</feature>
<feature type="active site" description="Schiff-base intermediate with DNA" evidence="2">
    <location>
        <position position="2"/>
    </location>
</feature>
<feature type="active site" description="Proton donor" evidence="2">
    <location>
        <position position="3"/>
    </location>
</feature>
<feature type="active site" description="Proton donor; for beta-elimination activity" evidence="2">
    <location>
        <position position="58"/>
    </location>
</feature>
<feature type="active site" description="Proton donor; for delta-elimination activity" evidence="2">
    <location>
        <position position="267"/>
    </location>
</feature>
<feature type="binding site" evidence="2">
    <location>
        <position position="95"/>
    </location>
    <ligand>
        <name>DNA</name>
        <dbReference type="ChEBI" id="CHEBI:16991"/>
    </ligand>
</feature>
<feature type="binding site" evidence="2">
    <location>
        <position position="113"/>
    </location>
    <ligand>
        <name>DNA</name>
        <dbReference type="ChEBI" id="CHEBI:16991"/>
    </ligand>
</feature>
<feature type="binding site" evidence="2">
    <location>
        <position position="158"/>
    </location>
    <ligand>
        <name>DNA</name>
        <dbReference type="ChEBI" id="CHEBI:16991"/>
    </ligand>
</feature>
<name>FPG_DECAR</name>
<organism>
    <name type="scientific">Dechloromonas aromatica (strain RCB)</name>
    <dbReference type="NCBI Taxonomy" id="159087"/>
    <lineage>
        <taxon>Bacteria</taxon>
        <taxon>Pseudomonadati</taxon>
        <taxon>Pseudomonadota</taxon>
        <taxon>Betaproteobacteria</taxon>
        <taxon>Rhodocyclales</taxon>
        <taxon>Azonexaceae</taxon>
        <taxon>Dechloromonas</taxon>
    </lineage>
</organism>
<accession>Q479M6</accession>
<proteinExistence type="inferred from homology"/>
<keyword id="KW-0227">DNA damage</keyword>
<keyword id="KW-0234">DNA repair</keyword>
<keyword id="KW-0238">DNA-binding</keyword>
<keyword id="KW-0326">Glycosidase</keyword>
<keyword id="KW-0378">Hydrolase</keyword>
<keyword id="KW-0456">Lyase</keyword>
<keyword id="KW-0479">Metal-binding</keyword>
<keyword id="KW-0511">Multifunctional enzyme</keyword>
<keyword id="KW-0862">Zinc</keyword>
<keyword id="KW-0863">Zinc-finger</keyword>
<reference key="1">
    <citation type="journal article" date="2009" name="BMC Genomics">
        <title>Metabolic analysis of the soil microbe Dechloromonas aromatica str. RCB: indications of a surprisingly complex life-style and cryptic anaerobic pathways for aromatic degradation.</title>
        <authorList>
            <person name="Salinero K.K."/>
            <person name="Keller K."/>
            <person name="Feil W.S."/>
            <person name="Feil H."/>
            <person name="Trong S."/>
            <person name="Di Bartolo G."/>
            <person name="Lapidus A."/>
        </authorList>
    </citation>
    <scope>NUCLEOTIDE SEQUENCE [LARGE SCALE GENOMIC DNA]</scope>
    <source>
        <strain>RCB</strain>
    </source>
</reference>
<protein>
    <recommendedName>
        <fullName evidence="2">Formamidopyrimidine-DNA glycosylase</fullName>
        <shortName evidence="2">Fapy-DNA glycosylase</shortName>
        <ecNumber evidence="2">3.2.2.23</ecNumber>
    </recommendedName>
    <alternativeName>
        <fullName evidence="2">DNA-(apurinic or apyrimidinic site) lyase MutM</fullName>
        <shortName evidence="2">AP lyase MutM</shortName>
        <ecNumber evidence="2">4.2.99.18</ecNumber>
    </alternativeName>
</protein>
<gene>
    <name evidence="2" type="primary">mutM</name>
    <name evidence="2" type="synonym">fpg</name>
    <name type="ordered locus">Daro_3726</name>
</gene>
<dbReference type="EC" id="3.2.2.23" evidence="2"/>
<dbReference type="EC" id="4.2.99.18" evidence="2"/>
<dbReference type="EMBL" id="CP000089">
    <property type="protein sequence ID" value="AAZ48455.1"/>
    <property type="molecule type" value="Genomic_DNA"/>
</dbReference>
<dbReference type="SMR" id="Q479M6"/>
<dbReference type="STRING" id="159087.Daro_3726"/>
<dbReference type="KEGG" id="dar:Daro_3726"/>
<dbReference type="eggNOG" id="COG0266">
    <property type="taxonomic scope" value="Bacteria"/>
</dbReference>
<dbReference type="HOGENOM" id="CLU_038423_1_1_4"/>
<dbReference type="OrthoDB" id="9800855at2"/>
<dbReference type="GO" id="GO:0034039">
    <property type="term" value="F:8-oxo-7,8-dihydroguanine DNA N-glycosylase activity"/>
    <property type="evidence" value="ECO:0007669"/>
    <property type="project" value="TreeGrafter"/>
</dbReference>
<dbReference type="GO" id="GO:0140078">
    <property type="term" value="F:class I DNA-(apurinic or apyrimidinic site) endonuclease activity"/>
    <property type="evidence" value="ECO:0007669"/>
    <property type="project" value="UniProtKB-EC"/>
</dbReference>
<dbReference type="GO" id="GO:0003684">
    <property type="term" value="F:damaged DNA binding"/>
    <property type="evidence" value="ECO:0007669"/>
    <property type="project" value="InterPro"/>
</dbReference>
<dbReference type="GO" id="GO:0008270">
    <property type="term" value="F:zinc ion binding"/>
    <property type="evidence" value="ECO:0007669"/>
    <property type="project" value="UniProtKB-UniRule"/>
</dbReference>
<dbReference type="GO" id="GO:0006284">
    <property type="term" value="P:base-excision repair"/>
    <property type="evidence" value="ECO:0007669"/>
    <property type="project" value="InterPro"/>
</dbReference>
<dbReference type="CDD" id="cd08966">
    <property type="entry name" value="EcFpg-like_N"/>
    <property type="match status" value="1"/>
</dbReference>
<dbReference type="FunFam" id="1.10.8.50:FF:000003">
    <property type="entry name" value="Formamidopyrimidine-DNA glycosylase"/>
    <property type="match status" value="1"/>
</dbReference>
<dbReference type="Gene3D" id="1.10.8.50">
    <property type="match status" value="1"/>
</dbReference>
<dbReference type="Gene3D" id="3.20.190.10">
    <property type="entry name" value="MutM-like, N-terminal"/>
    <property type="match status" value="1"/>
</dbReference>
<dbReference type="HAMAP" id="MF_00103">
    <property type="entry name" value="Fapy_DNA_glycosyl"/>
    <property type="match status" value="1"/>
</dbReference>
<dbReference type="InterPro" id="IPR015886">
    <property type="entry name" value="DNA_glyclase/AP_lyase_DNA-bd"/>
</dbReference>
<dbReference type="InterPro" id="IPR015887">
    <property type="entry name" value="DNA_glyclase_Znf_dom_DNA_BS"/>
</dbReference>
<dbReference type="InterPro" id="IPR020629">
    <property type="entry name" value="Formamido-pyr_DNA_Glyclase"/>
</dbReference>
<dbReference type="InterPro" id="IPR012319">
    <property type="entry name" value="FPG_cat"/>
</dbReference>
<dbReference type="InterPro" id="IPR035937">
    <property type="entry name" value="MutM-like_N-ter"/>
</dbReference>
<dbReference type="InterPro" id="IPR010979">
    <property type="entry name" value="Ribosomal_uS13-like_H2TH"/>
</dbReference>
<dbReference type="InterPro" id="IPR000214">
    <property type="entry name" value="Znf_DNA_glyclase/AP_lyase"/>
</dbReference>
<dbReference type="InterPro" id="IPR010663">
    <property type="entry name" value="Znf_FPG/IleRS"/>
</dbReference>
<dbReference type="NCBIfam" id="TIGR00577">
    <property type="entry name" value="fpg"/>
    <property type="match status" value="1"/>
</dbReference>
<dbReference type="NCBIfam" id="NF002211">
    <property type="entry name" value="PRK01103.1"/>
    <property type="match status" value="1"/>
</dbReference>
<dbReference type="PANTHER" id="PTHR22993">
    <property type="entry name" value="FORMAMIDOPYRIMIDINE-DNA GLYCOSYLASE"/>
    <property type="match status" value="1"/>
</dbReference>
<dbReference type="PANTHER" id="PTHR22993:SF9">
    <property type="entry name" value="FORMAMIDOPYRIMIDINE-DNA GLYCOSYLASE"/>
    <property type="match status" value="1"/>
</dbReference>
<dbReference type="Pfam" id="PF01149">
    <property type="entry name" value="Fapy_DNA_glyco"/>
    <property type="match status" value="1"/>
</dbReference>
<dbReference type="Pfam" id="PF06831">
    <property type="entry name" value="H2TH"/>
    <property type="match status" value="1"/>
</dbReference>
<dbReference type="Pfam" id="PF06827">
    <property type="entry name" value="zf-FPG_IleRS"/>
    <property type="match status" value="1"/>
</dbReference>
<dbReference type="SMART" id="SM00898">
    <property type="entry name" value="Fapy_DNA_glyco"/>
    <property type="match status" value="1"/>
</dbReference>
<dbReference type="SMART" id="SM01232">
    <property type="entry name" value="H2TH"/>
    <property type="match status" value="1"/>
</dbReference>
<dbReference type="SUPFAM" id="SSF57716">
    <property type="entry name" value="Glucocorticoid receptor-like (DNA-binding domain)"/>
    <property type="match status" value="1"/>
</dbReference>
<dbReference type="SUPFAM" id="SSF81624">
    <property type="entry name" value="N-terminal domain of MutM-like DNA repair proteins"/>
    <property type="match status" value="1"/>
</dbReference>
<dbReference type="SUPFAM" id="SSF46946">
    <property type="entry name" value="S13-like H2TH domain"/>
    <property type="match status" value="1"/>
</dbReference>
<dbReference type="PROSITE" id="PS51068">
    <property type="entry name" value="FPG_CAT"/>
    <property type="match status" value="1"/>
</dbReference>
<dbReference type="PROSITE" id="PS01242">
    <property type="entry name" value="ZF_FPG_1"/>
    <property type="match status" value="1"/>
</dbReference>
<dbReference type="PROSITE" id="PS51066">
    <property type="entry name" value="ZF_FPG_2"/>
    <property type="match status" value="1"/>
</dbReference>